<gene>
    <name evidence="1" type="primary">rpl16</name>
</gene>
<geneLocation type="chloroplast"/>
<protein>
    <recommendedName>
        <fullName evidence="1">Large ribosomal subunit protein uL16c</fullName>
    </recommendedName>
    <alternativeName>
        <fullName evidence="2">50S ribosomal protein L16, chloroplastic</fullName>
    </alternativeName>
</protein>
<comment type="subunit">
    <text evidence="1">Part of the 50S ribosomal subunit.</text>
</comment>
<comment type="subcellular location">
    <subcellularLocation>
        <location>Plastid</location>
        <location>Chloroplast</location>
    </subcellularLocation>
</comment>
<comment type="similarity">
    <text evidence="1">Belongs to the universal ribosomal protein uL16 family.</text>
</comment>
<dbReference type="EMBL" id="AF022186">
    <property type="protein sequence ID" value="AAF12914.1"/>
    <property type="molecule type" value="Genomic_DNA"/>
</dbReference>
<dbReference type="RefSeq" id="NP_045180.1">
    <property type="nucleotide sequence ID" value="NC_001840.1"/>
</dbReference>
<dbReference type="SMR" id="Q9TLT9"/>
<dbReference type="GeneID" id="800286"/>
<dbReference type="GO" id="GO:0009507">
    <property type="term" value="C:chloroplast"/>
    <property type="evidence" value="ECO:0007669"/>
    <property type="project" value="UniProtKB-SubCell"/>
</dbReference>
<dbReference type="GO" id="GO:0005762">
    <property type="term" value="C:mitochondrial large ribosomal subunit"/>
    <property type="evidence" value="ECO:0007669"/>
    <property type="project" value="TreeGrafter"/>
</dbReference>
<dbReference type="GO" id="GO:0019843">
    <property type="term" value="F:rRNA binding"/>
    <property type="evidence" value="ECO:0007669"/>
    <property type="project" value="InterPro"/>
</dbReference>
<dbReference type="GO" id="GO:0003735">
    <property type="term" value="F:structural constituent of ribosome"/>
    <property type="evidence" value="ECO:0007669"/>
    <property type="project" value="InterPro"/>
</dbReference>
<dbReference type="GO" id="GO:0032543">
    <property type="term" value="P:mitochondrial translation"/>
    <property type="evidence" value="ECO:0007669"/>
    <property type="project" value="TreeGrafter"/>
</dbReference>
<dbReference type="CDD" id="cd01433">
    <property type="entry name" value="Ribosomal_L16_L10e"/>
    <property type="match status" value="1"/>
</dbReference>
<dbReference type="FunFam" id="3.90.1170.10:FF:000001">
    <property type="entry name" value="50S ribosomal protein L16"/>
    <property type="match status" value="1"/>
</dbReference>
<dbReference type="Gene3D" id="3.90.1170.10">
    <property type="entry name" value="Ribosomal protein L10e/L16"/>
    <property type="match status" value="1"/>
</dbReference>
<dbReference type="HAMAP" id="MF_01342">
    <property type="entry name" value="Ribosomal_uL16"/>
    <property type="match status" value="1"/>
</dbReference>
<dbReference type="InterPro" id="IPR047873">
    <property type="entry name" value="Ribosomal_uL16"/>
</dbReference>
<dbReference type="InterPro" id="IPR000114">
    <property type="entry name" value="Ribosomal_uL16_bact-type"/>
</dbReference>
<dbReference type="InterPro" id="IPR020798">
    <property type="entry name" value="Ribosomal_uL16_CS"/>
</dbReference>
<dbReference type="InterPro" id="IPR016180">
    <property type="entry name" value="Ribosomal_uL16_dom"/>
</dbReference>
<dbReference type="InterPro" id="IPR036920">
    <property type="entry name" value="Ribosomal_uL16_sf"/>
</dbReference>
<dbReference type="NCBIfam" id="TIGR01164">
    <property type="entry name" value="rplP_bact"/>
    <property type="match status" value="1"/>
</dbReference>
<dbReference type="PANTHER" id="PTHR12220">
    <property type="entry name" value="50S/60S RIBOSOMAL PROTEIN L16"/>
    <property type="match status" value="1"/>
</dbReference>
<dbReference type="PANTHER" id="PTHR12220:SF13">
    <property type="entry name" value="LARGE RIBOSOMAL SUBUNIT PROTEIN UL16M"/>
    <property type="match status" value="1"/>
</dbReference>
<dbReference type="Pfam" id="PF00252">
    <property type="entry name" value="Ribosomal_L16"/>
    <property type="match status" value="1"/>
</dbReference>
<dbReference type="PRINTS" id="PR00060">
    <property type="entry name" value="RIBOSOMALL16"/>
</dbReference>
<dbReference type="SUPFAM" id="SSF54686">
    <property type="entry name" value="Ribosomal protein L16p/L10e"/>
    <property type="match status" value="1"/>
</dbReference>
<dbReference type="PROSITE" id="PS00586">
    <property type="entry name" value="RIBOSOMAL_L16_1"/>
    <property type="match status" value="1"/>
</dbReference>
<dbReference type="PROSITE" id="PS00701">
    <property type="entry name" value="RIBOSOMAL_L16_2"/>
    <property type="match status" value="1"/>
</dbReference>
<organism>
    <name type="scientific">Cyanidium caldarium</name>
    <name type="common">Red alga</name>
    <dbReference type="NCBI Taxonomy" id="2771"/>
    <lineage>
        <taxon>Eukaryota</taxon>
        <taxon>Rhodophyta</taxon>
        <taxon>Bangiophyceae</taxon>
        <taxon>Cyanidiales</taxon>
        <taxon>Cyanidiaceae</taxon>
        <taxon>Cyanidium</taxon>
    </lineage>
</organism>
<keyword id="KW-0150">Chloroplast</keyword>
<keyword id="KW-0934">Plastid</keyword>
<keyword id="KW-0687">Ribonucleoprotein</keyword>
<keyword id="KW-0689">Ribosomal protein</keyword>
<evidence type="ECO:0000255" key="1">
    <source>
        <dbReference type="HAMAP-Rule" id="MF_01342"/>
    </source>
</evidence>
<evidence type="ECO:0000305" key="2"/>
<reference key="1">
    <citation type="journal article" date="2000" name="J. Mol. Evol.">
        <title>The structure and gene repertoire of an ancient red algal plastid genome.</title>
        <authorList>
            <person name="Gloeckner G."/>
            <person name="Rosenthal A."/>
            <person name="Valentin K.-U."/>
        </authorList>
    </citation>
    <scope>NUCLEOTIDE SEQUENCE [LARGE SCALE GENOMIC DNA]</scope>
    <source>
        <strain>RK-1</strain>
    </source>
</reference>
<accession>Q9TLT9</accession>
<feature type="chain" id="PRO_0000062277" description="Large ribosomal subunit protein uL16c">
    <location>
        <begin position="1"/>
        <end position="140"/>
    </location>
</feature>
<sequence length="140" mass="15786">MLSPKKTKYRKFHRGRLKGHATKGSALAFGRYGIQALTSSWITSRQIESVRRVIVRHLKRGGKLWIRIFPDKAVTAKPLETRMGSGKGSPEHWIAVVKSGHILFEIDGVSLELAKEAVKLAIYKLPIKCKFLSNDEFAKD</sequence>
<name>RK16_CYACA</name>
<proteinExistence type="inferred from homology"/>